<reference key="1">
    <citation type="journal article" date="1997" name="Nature">
        <title>The nucleotide sequence of Saccharomyces cerevisiae chromosome V.</title>
        <authorList>
            <person name="Dietrich F.S."/>
            <person name="Mulligan J.T."/>
            <person name="Hennessy K.M."/>
            <person name="Yelton M.A."/>
            <person name="Allen E."/>
            <person name="Araujo R."/>
            <person name="Aviles E."/>
            <person name="Berno A."/>
            <person name="Brennan T."/>
            <person name="Carpenter J."/>
            <person name="Chen E."/>
            <person name="Cherry J.M."/>
            <person name="Chung E."/>
            <person name="Duncan M."/>
            <person name="Guzman E."/>
            <person name="Hartzell G."/>
            <person name="Hunicke-Smith S."/>
            <person name="Hyman R.W."/>
            <person name="Kayser A."/>
            <person name="Komp C."/>
            <person name="Lashkari D."/>
            <person name="Lew H."/>
            <person name="Lin D."/>
            <person name="Mosedale D."/>
            <person name="Nakahara K."/>
            <person name="Namath A."/>
            <person name="Norgren R."/>
            <person name="Oefner P."/>
            <person name="Oh C."/>
            <person name="Petel F.X."/>
            <person name="Roberts D."/>
            <person name="Sehl P."/>
            <person name="Schramm S."/>
            <person name="Shogren T."/>
            <person name="Smith V."/>
            <person name="Taylor P."/>
            <person name="Wei Y."/>
            <person name="Botstein D."/>
            <person name="Davis R.W."/>
        </authorList>
    </citation>
    <scope>NUCLEOTIDE SEQUENCE [LARGE SCALE GENOMIC DNA]</scope>
    <source>
        <strain>ATCC 204508 / S288c</strain>
    </source>
</reference>
<reference key="2">
    <citation type="journal article" date="2014" name="G3 (Bethesda)">
        <title>The reference genome sequence of Saccharomyces cerevisiae: Then and now.</title>
        <authorList>
            <person name="Engel S.R."/>
            <person name="Dietrich F.S."/>
            <person name="Fisk D.G."/>
            <person name="Binkley G."/>
            <person name="Balakrishnan R."/>
            <person name="Costanzo M.C."/>
            <person name="Dwight S.S."/>
            <person name="Hitz B.C."/>
            <person name="Karra K."/>
            <person name="Nash R.S."/>
            <person name="Weng S."/>
            <person name="Wong E.D."/>
            <person name="Lloyd P."/>
            <person name="Skrzypek M.S."/>
            <person name="Miyasato S.R."/>
            <person name="Simison M."/>
            <person name="Cherry J.M."/>
        </authorList>
    </citation>
    <scope>GENOME REANNOTATION</scope>
    <source>
        <strain>ATCC 204508 / S288c</strain>
    </source>
</reference>
<organism>
    <name type="scientific">Saccharomyces cerevisiae (strain ATCC 204508 / S288c)</name>
    <name type="common">Baker's yeast</name>
    <dbReference type="NCBI Taxonomy" id="559292"/>
    <lineage>
        <taxon>Eukaryota</taxon>
        <taxon>Fungi</taxon>
        <taxon>Dikarya</taxon>
        <taxon>Ascomycota</taxon>
        <taxon>Saccharomycotina</taxon>
        <taxon>Saccharomycetes</taxon>
        <taxon>Saccharomycetales</taxon>
        <taxon>Saccharomycetaceae</taxon>
        <taxon>Saccharomyces</taxon>
    </lineage>
</organism>
<dbReference type="EMBL" id="KJ412241">
    <property type="protein sequence ID" value="AHX39284.1"/>
    <property type="molecule type" value="Genomic_DNA"/>
</dbReference>
<dbReference type="PaxDb" id="4932-YER147C-A"/>
<dbReference type="EnsemblFungi" id="YER147C-A_mRNA">
    <property type="protein sequence ID" value="YER147C-A"/>
    <property type="gene ID" value="YER147C-A"/>
</dbReference>
<dbReference type="AGR" id="SGD:S000028759"/>
<dbReference type="SGD" id="S000028759">
    <property type="gene designation" value="YER147C-A"/>
</dbReference>
<dbReference type="HOGENOM" id="CLU_1876608_0_0_1"/>
<dbReference type="GO" id="GO:0016020">
    <property type="term" value="C:membrane"/>
    <property type="evidence" value="ECO:0007669"/>
    <property type="project" value="UniProtKB-SubCell"/>
</dbReference>
<protein>
    <recommendedName>
        <fullName evidence="2">Putative uncharacterized membrane protein YER147C-A</fullName>
    </recommendedName>
</protein>
<evidence type="ECO:0000255" key="1"/>
<evidence type="ECO:0000305" key="2"/>
<evidence type="ECO:0000305" key="3">
    <source>
    </source>
</evidence>
<evidence type="ECO:0000312" key="4">
    <source>
        <dbReference type="SGD" id="S000028759"/>
    </source>
</evidence>
<proteinExistence type="uncertain"/>
<feature type="signal peptide" evidence="1">
    <location>
        <begin position="1"/>
        <end position="19"/>
    </location>
</feature>
<feature type="chain" id="PRO_0000431002" description="Putative uncharacterized membrane protein YER147C-A">
    <location>
        <begin position="20"/>
        <end position="136"/>
    </location>
</feature>
<feature type="transmembrane region" description="Helical" evidence="1">
    <location>
        <begin position="75"/>
        <end position="97"/>
    </location>
</feature>
<name>YE147_YEAST</name>
<gene>
    <name evidence="4" type="ordered locus">YER147C-A</name>
</gene>
<keyword id="KW-0472">Membrane</keyword>
<keyword id="KW-0732">Signal</keyword>
<keyword id="KW-0812">Transmembrane</keyword>
<keyword id="KW-1133">Transmembrane helix</keyword>
<comment type="subcellular location">
    <subcellularLocation>
        <location evidence="1">Membrane</location>
        <topology evidence="1">Single-pass membrane protein</topology>
    </subcellularLocation>
</comment>
<comment type="miscellaneous">
    <text evidence="2">Partially overlaps SPT15.</text>
</comment>
<comment type="caution">
    <text evidence="3">Product of a dubious gene prediction unlikely to encode a functional protein. Because of that it is not part of the S.cerevisiae S288c complete/reference proteome set.</text>
</comment>
<sequence>MMTAAKRLGLYSALRACSATVFRSNLHPKVTVATMFCSVGTIPDVAEVSFSDSGAALFMSSSLWKVVAGFVPSRFWFSHTCLVFGSNTILFASLNSFKRSSSAIIKKVSLDTPVYVGLEKKNKMQPLLPCFFRRAV</sequence>
<accession>A0A023PXD5</accession>